<organism>
    <name type="scientific">Staphylococcus aureus (strain USA300)</name>
    <dbReference type="NCBI Taxonomy" id="367830"/>
    <lineage>
        <taxon>Bacteria</taxon>
        <taxon>Bacillati</taxon>
        <taxon>Bacillota</taxon>
        <taxon>Bacilli</taxon>
        <taxon>Bacillales</taxon>
        <taxon>Staphylococcaceae</taxon>
        <taxon>Staphylococcus</taxon>
    </lineage>
</organism>
<dbReference type="EC" id="6.3.5.3" evidence="1"/>
<dbReference type="EC" id="3.5.1.2" evidence="1"/>
<dbReference type="EMBL" id="CP000255">
    <property type="protein sequence ID" value="ABD21644.1"/>
    <property type="molecule type" value="Genomic_DNA"/>
</dbReference>
<dbReference type="RefSeq" id="WP_000666799.1">
    <property type="nucleotide sequence ID" value="NZ_CP027476.1"/>
</dbReference>
<dbReference type="SMR" id="Q2FI10"/>
<dbReference type="KEGG" id="saa:SAUSA300_0970"/>
<dbReference type="HOGENOM" id="CLU_001031_3_1_9"/>
<dbReference type="OMA" id="SNCDHDC"/>
<dbReference type="UniPathway" id="UPA00074">
    <property type="reaction ID" value="UER00128"/>
</dbReference>
<dbReference type="Proteomes" id="UP000001939">
    <property type="component" value="Chromosome"/>
</dbReference>
<dbReference type="GO" id="GO:0005737">
    <property type="term" value="C:cytoplasm"/>
    <property type="evidence" value="ECO:0007669"/>
    <property type="project" value="UniProtKB-SubCell"/>
</dbReference>
<dbReference type="GO" id="GO:0005524">
    <property type="term" value="F:ATP binding"/>
    <property type="evidence" value="ECO:0007669"/>
    <property type="project" value="UniProtKB-KW"/>
</dbReference>
<dbReference type="GO" id="GO:0004359">
    <property type="term" value="F:glutaminase activity"/>
    <property type="evidence" value="ECO:0007669"/>
    <property type="project" value="UniProtKB-EC"/>
</dbReference>
<dbReference type="GO" id="GO:0004642">
    <property type="term" value="F:phosphoribosylformylglycinamidine synthase activity"/>
    <property type="evidence" value="ECO:0007669"/>
    <property type="project" value="UniProtKB-UniRule"/>
</dbReference>
<dbReference type="GO" id="GO:0006189">
    <property type="term" value="P:'de novo' IMP biosynthetic process"/>
    <property type="evidence" value="ECO:0007669"/>
    <property type="project" value="UniProtKB-UniRule"/>
</dbReference>
<dbReference type="CDD" id="cd01740">
    <property type="entry name" value="GATase1_FGAR_AT"/>
    <property type="match status" value="1"/>
</dbReference>
<dbReference type="Gene3D" id="3.40.50.880">
    <property type="match status" value="1"/>
</dbReference>
<dbReference type="HAMAP" id="MF_00421">
    <property type="entry name" value="PurQ"/>
    <property type="match status" value="1"/>
</dbReference>
<dbReference type="InterPro" id="IPR029062">
    <property type="entry name" value="Class_I_gatase-like"/>
</dbReference>
<dbReference type="InterPro" id="IPR010075">
    <property type="entry name" value="PRibForGlyAmidine_synth_PurQ"/>
</dbReference>
<dbReference type="NCBIfam" id="TIGR01737">
    <property type="entry name" value="FGAM_synth_I"/>
    <property type="match status" value="1"/>
</dbReference>
<dbReference type="NCBIfam" id="NF002957">
    <property type="entry name" value="PRK03619.1"/>
    <property type="match status" value="1"/>
</dbReference>
<dbReference type="PANTHER" id="PTHR47552">
    <property type="entry name" value="PHOSPHORIBOSYLFORMYLGLYCINAMIDINE SYNTHASE SUBUNIT PURQ"/>
    <property type="match status" value="1"/>
</dbReference>
<dbReference type="PANTHER" id="PTHR47552:SF1">
    <property type="entry name" value="PHOSPHORIBOSYLFORMYLGLYCINAMIDINE SYNTHASE SUBUNIT PURQ"/>
    <property type="match status" value="1"/>
</dbReference>
<dbReference type="Pfam" id="PF13507">
    <property type="entry name" value="GATase_5"/>
    <property type="match status" value="1"/>
</dbReference>
<dbReference type="PIRSF" id="PIRSF001586">
    <property type="entry name" value="FGAM_synth_I"/>
    <property type="match status" value="1"/>
</dbReference>
<dbReference type="SMART" id="SM01211">
    <property type="entry name" value="GATase_5"/>
    <property type="match status" value="1"/>
</dbReference>
<dbReference type="SUPFAM" id="SSF52317">
    <property type="entry name" value="Class I glutamine amidotransferase-like"/>
    <property type="match status" value="1"/>
</dbReference>
<dbReference type="PROSITE" id="PS51273">
    <property type="entry name" value="GATASE_TYPE_1"/>
    <property type="match status" value="1"/>
</dbReference>
<comment type="function">
    <text evidence="1">Part of the phosphoribosylformylglycinamidine synthase complex involved in the purines biosynthetic pathway. Catalyzes the ATP-dependent conversion of formylglycinamide ribonucleotide (FGAR) and glutamine to yield formylglycinamidine ribonucleotide (FGAM) and glutamate. The FGAM synthase complex is composed of three subunits. PurQ produces an ammonia molecule by converting glutamine to glutamate. PurL transfers the ammonia molecule to FGAR to form FGAM in an ATP-dependent manner. PurS interacts with PurQ and PurL and is thought to assist in the transfer of the ammonia molecule from PurQ to PurL.</text>
</comment>
<comment type="catalytic activity">
    <reaction evidence="1">
        <text>N(2)-formyl-N(1)-(5-phospho-beta-D-ribosyl)glycinamide + L-glutamine + ATP + H2O = 2-formamido-N(1)-(5-O-phospho-beta-D-ribosyl)acetamidine + L-glutamate + ADP + phosphate + H(+)</text>
        <dbReference type="Rhea" id="RHEA:17129"/>
        <dbReference type="ChEBI" id="CHEBI:15377"/>
        <dbReference type="ChEBI" id="CHEBI:15378"/>
        <dbReference type="ChEBI" id="CHEBI:29985"/>
        <dbReference type="ChEBI" id="CHEBI:30616"/>
        <dbReference type="ChEBI" id="CHEBI:43474"/>
        <dbReference type="ChEBI" id="CHEBI:58359"/>
        <dbReference type="ChEBI" id="CHEBI:147286"/>
        <dbReference type="ChEBI" id="CHEBI:147287"/>
        <dbReference type="ChEBI" id="CHEBI:456216"/>
        <dbReference type="EC" id="6.3.5.3"/>
    </reaction>
</comment>
<comment type="catalytic activity">
    <reaction evidence="1">
        <text>L-glutamine + H2O = L-glutamate + NH4(+)</text>
        <dbReference type="Rhea" id="RHEA:15889"/>
        <dbReference type="ChEBI" id="CHEBI:15377"/>
        <dbReference type="ChEBI" id="CHEBI:28938"/>
        <dbReference type="ChEBI" id="CHEBI:29985"/>
        <dbReference type="ChEBI" id="CHEBI:58359"/>
        <dbReference type="EC" id="3.5.1.2"/>
    </reaction>
</comment>
<comment type="pathway">
    <text evidence="1">Purine metabolism; IMP biosynthesis via de novo pathway; 5-amino-1-(5-phospho-D-ribosyl)imidazole from N(2)-formyl-N(1)-(5-phospho-D-ribosyl)glycinamide: step 1/2.</text>
</comment>
<comment type="subunit">
    <text evidence="1">Part of the FGAM synthase complex composed of 1 PurL, 1 PurQ and 2 PurS subunits.</text>
</comment>
<comment type="subcellular location">
    <subcellularLocation>
        <location evidence="1">Cytoplasm</location>
    </subcellularLocation>
</comment>
<reference key="1">
    <citation type="journal article" date="2006" name="Lancet">
        <title>Complete genome sequence of USA300, an epidemic clone of community-acquired meticillin-resistant Staphylococcus aureus.</title>
        <authorList>
            <person name="Diep B.A."/>
            <person name="Gill S.R."/>
            <person name="Chang R.F."/>
            <person name="Phan T.H."/>
            <person name="Chen J.H."/>
            <person name="Davidson M.G."/>
            <person name="Lin F."/>
            <person name="Lin J."/>
            <person name="Carleton H.A."/>
            <person name="Mongodin E.F."/>
            <person name="Sensabaugh G.F."/>
            <person name="Perdreau-Remington F."/>
        </authorList>
    </citation>
    <scope>NUCLEOTIDE SEQUENCE [LARGE SCALE GENOMIC DNA]</scope>
    <source>
        <strain>USA300</strain>
    </source>
</reference>
<gene>
    <name evidence="1" type="primary">purQ</name>
    <name type="ordered locus">SAUSA300_0970</name>
</gene>
<name>PURQ_STAA3</name>
<evidence type="ECO:0000255" key="1">
    <source>
        <dbReference type="HAMAP-Rule" id="MF_00421"/>
    </source>
</evidence>
<protein>
    <recommendedName>
        <fullName evidence="1">Phosphoribosylformylglycinamidine synthase subunit PurQ</fullName>
        <shortName evidence="1">FGAM synthase</shortName>
        <ecNumber evidence="1">6.3.5.3</ecNumber>
    </recommendedName>
    <alternativeName>
        <fullName evidence="1">Formylglycinamide ribonucleotide amidotransferase subunit I</fullName>
        <shortName evidence="1">FGAR amidotransferase I</shortName>
        <shortName evidence="1">FGAR-AT I</shortName>
    </alternativeName>
    <alternativeName>
        <fullName evidence="1">Glutaminase PurQ</fullName>
        <ecNumber evidence="1">3.5.1.2</ecNumber>
    </alternativeName>
    <alternativeName>
        <fullName evidence="1">Phosphoribosylformylglycinamidine synthase subunit I</fullName>
    </alternativeName>
</protein>
<sequence>MKFAVLVFPGSNCDRDMFNAAIKSGVEAEYVDYRETSLSGFDGVLIPGGFSFGDYLRSGAMASVAPIISEVKRLAAEGKPVLGVCNGFQILTEIGLLPGALLHNDSHLFISRNEELEIVNNQTAFTNLYEQGEKVIYPVAHGEGHYYCTDEIYQQLKANNQIILKYVNNPNGSYDDIAGIVNEKGNVCGMMPHPERALETLLGTDSGVKLFEAMVKSWREQHV</sequence>
<accession>Q2FI10</accession>
<feature type="chain" id="PRO_0000252734" description="Phosphoribosylformylglycinamidine synthase subunit PurQ">
    <location>
        <begin position="1"/>
        <end position="223"/>
    </location>
</feature>
<feature type="domain" description="Glutamine amidotransferase type-1" evidence="1">
    <location>
        <begin position="3"/>
        <end position="223"/>
    </location>
</feature>
<feature type="active site" description="Nucleophile" evidence="1">
    <location>
        <position position="85"/>
    </location>
</feature>
<feature type="active site" evidence="1">
    <location>
        <position position="193"/>
    </location>
</feature>
<feature type="active site" evidence="1">
    <location>
        <position position="195"/>
    </location>
</feature>
<keyword id="KW-0067">ATP-binding</keyword>
<keyword id="KW-0963">Cytoplasm</keyword>
<keyword id="KW-0315">Glutamine amidotransferase</keyword>
<keyword id="KW-0378">Hydrolase</keyword>
<keyword id="KW-0436">Ligase</keyword>
<keyword id="KW-0547">Nucleotide-binding</keyword>
<keyword id="KW-0658">Purine biosynthesis</keyword>
<proteinExistence type="inferred from homology"/>